<evidence type="ECO:0000305" key="1"/>
<feature type="chain" id="PRO_0000277384" description="Uncharacterized protein ycf73">
    <location>
        <begin position="1"/>
        <end position="173"/>
    </location>
</feature>
<comment type="subcellular location">
    <subcellularLocation>
        <location>Plastid</location>
        <location>Chloroplast</location>
    </subcellularLocation>
</comment>
<comment type="similarity">
    <text evidence="1">Belongs to the ycf73 family.</text>
</comment>
<proteinExistence type="inferred from homology"/>
<dbReference type="EMBL" id="X86563">
    <property type="protein sequence ID" value="CAA60364.1"/>
    <property type="molecule type" value="Genomic_DNA"/>
</dbReference>
<dbReference type="EMBL" id="X86563">
    <property type="protein sequence ID" value="CAA60337.1"/>
    <property type="molecule type" value="Genomic_DNA"/>
</dbReference>
<dbReference type="PIR" id="S58632">
    <property type="entry name" value="S58632"/>
</dbReference>
<dbReference type="RefSeq" id="NP_043075.1">
    <property type="nucleotide sequence ID" value="NC_001666.2"/>
</dbReference>
<dbReference type="RefSeq" id="NP_043103.1">
    <property type="nucleotide sequence ID" value="NC_001666.2"/>
</dbReference>
<dbReference type="SMR" id="Q36907"/>
<dbReference type="FunCoup" id="Q36907">
    <property type="interactions" value="1015"/>
</dbReference>
<dbReference type="PaxDb" id="4577-GRMZM5G872747_P01"/>
<dbReference type="KEGG" id="zma:1466373"/>
<dbReference type="KEGG" id="zma:1466384"/>
<dbReference type="eggNOG" id="ENOG502R67J">
    <property type="taxonomic scope" value="Eukaryota"/>
</dbReference>
<dbReference type="HOGENOM" id="CLU_111346_0_0_1"/>
<dbReference type="InParanoid" id="Q36907"/>
<dbReference type="OrthoDB" id="630954at2759"/>
<dbReference type="Proteomes" id="UP000007305">
    <property type="component" value="Chloroplast"/>
</dbReference>
<dbReference type="GO" id="GO:0009507">
    <property type="term" value="C:chloroplast"/>
    <property type="evidence" value="ECO:0007669"/>
    <property type="project" value="UniProtKB-SubCell"/>
</dbReference>
<gene>
    <name type="primary">ycf73-A</name>
</gene>
<gene>
    <name type="primary">ycf73-B</name>
</gene>
<accession>Q36907</accession>
<organism>
    <name type="scientific">Zea mays</name>
    <name type="common">Maize</name>
    <dbReference type="NCBI Taxonomy" id="4577"/>
    <lineage>
        <taxon>Eukaryota</taxon>
        <taxon>Viridiplantae</taxon>
        <taxon>Streptophyta</taxon>
        <taxon>Embryophyta</taxon>
        <taxon>Tracheophyta</taxon>
        <taxon>Spermatophyta</taxon>
        <taxon>Magnoliopsida</taxon>
        <taxon>Liliopsida</taxon>
        <taxon>Poales</taxon>
        <taxon>Poaceae</taxon>
        <taxon>PACMAD clade</taxon>
        <taxon>Panicoideae</taxon>
        <taxon>Andropogonodae</taxon>
        <taxon>Andropogoneae</taxon>
        <taxon>Tripsacinae</taxon>
        <taxon>Zea</taxon>
    </lineage>
</organism>
<protein>
    <recommendedName>
        <fullName>Uncharacterized protein ycf73</fullName>
    </recommendedName>
    <alternativeName>
        <fullName>ORF173</fullName>
    </alternativeName>
</protein>
<reference key="1">
    <citation type="journal article" date="1995" name="J. Mol. Biol.">
        <title>Complete sequence of the maize chloroplast genome: gene content, hotspots of divergence and fine tuning of genetic information by transcript editing.</title>
        <authorList>
            <person name="Maier R.M."/>
            <person name="Neckermann K."/>
            <person name="Igloi G.L."/>
            <person name="Koessel H."/>
        </authorList>
    </citation>
    <scope>NUCLEOTIDE SEQUENCE [LARGE SCALE GENOMIC DNA]</scope>
    <source>
        <strain>cv. B73</strain>
    </source>
</reference>
<keyword id="KW-0150">Chloroplast</keyword>
<keyword id="KW-0934">Plastid</keyword>
<keyword id="KW-1185">Reference proteome</keyword>
<geneLocation type="chloroplast"/>
<name>YCF73_MAIZE</name>
<sequence>MTKDETLLVFTLVVSSVSIFLFGILLFMVLISATRDFRERTKSKLVKIMIWAGIVVITFAIAVRIYPIFIFLLKERIKPLVEALYDKLPWIWEVSLSRYWDRLIDFLDRYLWACAQRIQTGIRKQKGEFVVTFSCRVKKRLYARAIEVGIHLSLLSNLFWILKTTLAVGYRLL</sequence>